<protein>
    <recommendedName>
        <fullName>B-cell receptor-associated protein 31</fullName>
        <shortName>BCR-associated protein 31</shortName>
        <shortName>Bap31</shortName>
    </recommendedName>
    <alternativeName>
        <fullName>p28</fullName>
    </alternativeName>
</protein>
<evidence type="ECO:0000250" key="1"/>
<evidence type="ECO:0000250" key="2">
    <source>
        <dbReference type="UniProtKB" id="P51572"/>
    </source>
</evidence>
<evidence type="ECO:0000255" key="3"/>
<evidence type="ECO:0000269" key="4">
    <source>
    </source>
</evidence>
<evidence type="ECO:0000269" key="5">
    <source>
    </source>
</evidence>
<evidence type="ECO:0000269" key="6">
    <source>
    </source>
</evidence>
<evidence type="ECO:0000305" key="7"/>
<gene>
    <name type="primary">Bcap31</name>
    <name type="synonym">Bap31</name>
</gene>
<keyword id="KW-0053">Apoptosis</keyword>
<keyword id="KW-0175">Coiled coil</keyword>
<keyword id="KW-0903">Direct protein sequencing</keyword>
<keyword id="KW-0256">Endoplasmic reticulum</keyword>
<keyword id="KW-0931">ER-Golgi transport</keyword>
<keyword id="KW-0472">Membrane</keyword>
<keyword id="KW-0653">Protein transport</keyword>
<keyword id="KW-1185">Reference proteome</keyword>
<keyword id="KW-0812">Transmembrane</keyword>
<keyword id="KW-1133">Transmembrane helix</keyword>
<keyword id="KW-0813">Transport</keyword>
<reference key="1">
    <citation type="journal article" date="1996" name="EMBO J.">
        <title>The specificity of association of the IgD molecule with the accessory proteins BAP31/BAP29 lies in the IgD transmembrane sequence.</title>
        <authorList>
            <person name="Adachi T."/>
            <person name="Schamel W.W.A."/>
            <person name="Kim K.-M."/>
            <person name="Watanabe T."/>
            <person name="Becker B."/>
            <person name="Nielsen P.J."/>
            <person name="Reth M."/>
        </authorList>
    </citation>
    <scope>NUCLEOTIDE SEQUENCE [MRNA]</scope>
    <scope>PROTEIN SEQUENCE OF 2-11</scope>
    <scope>INTERACTION WITH BCAP29 AND IGD</scope>
    <scope>TISSUE SPECIFICITY</scope>
    <source>
        <tissue>Plasmacytoma</tissue>
    </source>
</reference>
<reference key="2">
    <citation type="journal article" date="2005" name="Science">
        <title>The transcriptional landscape of the mammalian genome.</title>
        <authorList>
            <person name="Carninci P."/>
            <person name="Kasukawa T."/>
            <person name="Katayama S."/>
            <person name="Gough J."/>
            <person name="Frith M.C."/>
            <person name="Maeda N."/>
            <person name="Oyama R."/>
            <person name="Ravasi T."/>
            <person name="Lenhard B."/>
            <person name="Wells C."/>
            <person name="Kodzius R."/>
            <person name="Shimokawa K."/>
            <person name="Bajic V.B."/>
            <person name="Brenner S.E."/>
            <person name="Batalov S."/>
            <person name="Forrest A.R."/>
            <person name="Zavolan M."/>
            <person name="Davis M.J."/>
            <person name="Wilming L.G."/>
            <person name="Aidinis V."/>
            <person name="Allen J.E."/>
            <person name="Ambesi-Impiombato A."/>
            <person name="Apweiler R."/>
            <person name="Aturaliya R.N."/>
            <person name="Bailey T.L."/>
            <person name="Bansal M."/>
            <person name="Baxter L."/>
            <person name="Beisel K.W."/>
            <person name="Bersano T."/>
            <person name="Bono H."/>
            <person name="Chalk A.M."/>
            <person name="Chiu K.P."/>
            <person name="Choudhary V."/>
            <person name="Christoffels A."/>
            <person name="Clutterbuck D.R."/>
            <person name="Crowe M.L."/>
            <person name="Dalla E."/>
            <person name="Dalrymple B.P."/>
            <person name="de Bono B."/>
            <person name="Della Gatta G."/>
            <person name="di Bernardo D."/>
            <person name="Down T."/>
            <person name="Engstrom P."/>
            <person name="Fagiolini M."/>
            <person name="Faulkner G."/>
            <person name="Fletcher C.F."/>
            <person name="Fukushima T."/>
            <person name="Furuno M."/>
            <person name="Futaki S."/>
            <person name="Gariboldi M."/>
            <person name="Georgii-Hemming P."/>
            <person name="Gingeras T.R."/>
            <person name="Gojobori T."/>
            <person name="Green R.E."/>
            <person name="Gustincich S."/>
            <person name="Harbers M."/>
            <person name="Hayashi Y."/>
            <person name="Hensch T.K."/>
            <person name="Hirokawa N."/>
            <person name="Hill D."/>
            <person name="Huminiecki L."/>
            <person name="Iacono M."/>
            <person name="Ikeo K."/>
            <person name="Iwama A."/>
            <person name="Ishikawa T."/>
            <person name="Jakt M."/>
            <person name="Kanapin A."/>
            <person name="Katoh M."/>
            <person name="Kawasawa Y."/>
            <person name="Kelso J."/>
            <person name="Kitamura H."/>
            <person name="Kitano H."/>
            <person name="Kollias G."/>
            <person name="Krishnan S.P."/>
            <person name="Kruger A."/>
            <person name="Kummerfeld S.K."/>
            <person name="Kurochkin I.V."/>
            <person name="Lareau L.F."/>
            <person name="Lazarevic D."/>
            <person name="Lipovich L."/>
            <person name="Liu J."/>
            <person name="Liuni S."/>
            <person name="McWilliam S."/>
            <person name="Madan Babu M."/>
            <person name="Madera M."/>
            <person name="Marchionni L."/>
            <person name="Matsuda H."/>
            <person name="Matsuzawa S."/>
            <person name="Miki H."/>
            <person name="Mignone F."/>
            <person name="Miyake S."/>
            <person name="Morris K."/>
            <person name="Mottagui-Tabar S."/>
            <person name="Mulder N."/>
            <person name="Nakano N."/>
            <person name="Nakauchi H."/>
            <person name="Ng P."/>
            <person name="Nilsson R."/>
            <person name="Nishiguchi S."/>
            <person name="Nishikawa S."/>
            <person name="Nori F."/>
            <person name="Ohara O."/>
            <person name="Okazaki Y."/>
            <person name="Orlando V."/>
            <person name="Pang K.C."/>
            <person name="Pavan W.J."/>
            <person name="Pavesi G."/>
            <person name="Pesole G."/>
            <person name="Petrovsky N."/>
            <person name="Piazza S."/>
            <person name="Reed J."/>
            <person name="Reid J.F."/>
            <person name="Ring B.Z."/>
            <person name="Ringwald M."/>
            <person name="Rost B."/>
            <person name="Ruan Y."/>
            <person name="Salzberg S.L."/>
            <person name="Sandelin A."/>
            <person name="Schneider C."/>
            <person name="Schoenbach C."/>
            <person name="Sekiguchi K."/>
            <person name="Semple C.A."/>
            <person name="Seno S."/>
            <person name="Sessa L."/>
            <person name="Sheng Y."/>
            <person name="Shibata Y."/>
            <person name="Shimada H."/>
            <person name="Shimada K."/>
            <person name="Silva D."/>
            <person name="Sinclair B."/>
            <person name="Sperling S."/>
            <person name="Stupka E."/>
            <person name="Sugiura K."/>
            <person name="Sultana R."/>
            <person name="Takenaka Y."/>
            <person name="Taki K."/>
            <person name="Tammoja K."/>
            <person name="Tan S.L."/>
            <person name="Tang S."/>
            <person name="Taylor M.S."/>
            <person name="Tegner J."/>
            <person name="Teichmann S.A."/>
            <person name="Ueda H.R."/>
            <person name="van Nimwegen E."/>
            <person name="Verardo R."/>
            <person name="Wei C.L."/>
            <person name="Yagi K."/>
            <person name="Yamanishi H."/>
            <person name="Zabarovsky E."/>
            <person name="Zhu S."/>
            <person name="Zimmer A."/>
            <person name="Hide W."/>
            <person name="Bult C."/>
            <person name="Grimmond S.M."/>
            <person name="Teasdale R.D."/>
            <person name="Liu E.T."/>
            <person name="Brusic V."/>
            <person name="Quackenbush J."/>
            <person name="Wahlestedt C."/>
            <person name="Mattick J.S."/>
            <person name="Hume D.A."/>
            <person name="Kai C."/>
            <person name="Sasaki D."/>
            <person name="Tomaru Y."/>
            <person name="Fukuda S."/>
            <person name="Kanamori-Katayama M."/>
            <person name="Suzuki M."/>
            <person name="Aoki J."/>
            <person name="Arakawa T."/>
            <person name="Iida J."/>
            <person name="Imamura K."/>
            <person name="Itoh M."/>
            <person name="Kato T."/>
            <person name="Kawaji H."/>
            <person name="Kawagashira N."/>
            <person name="Kawashima T."/>
            <person name="Kojima M."/>
            <person name="Kondo S."/>
            <person name="Konno H."/>
            <person name="Nakano K."/>
            <person name="Ninomiya N."/>
            <person name="Nishio T."/>
            <person name="Okada M."/>
            <person name="Plessy C."/>
            <person name="Shibata K."/>
            <person name="Shiraki T."/>
            <person name="Suzuki S."/>
            <person name="Tagami M."/>
            <person name="Waki K."/>
            <person name="Watahiki A."/>
            <person name="Okamura-Oho Y."/>
            <person name="Suzuki H."/>
            <person name="Kawai J."/>
            <person name="Hayashizaki Y."/>
        </authorList>
    </citation>
    <scope>NUCLEOTIDE SEQUENCE [LARGE SCALE MRNA]</scope>
    <source>
        <strain>C57BL/6J</strain>
        <tissue>Embryo</tissue>
        <tissue>Small intestine</tissue>
    </source>
</reference>
<reference key="3">
    <citation type="journal article" date="2009" name="PLoS Biol.">
        <title>Lineage-specific biology revealed by a finished genome assembly of the mouse.</title>
        <authorList>
            <person name="Church D.M."/>
            <person name="Goodstadt L."/>
            <person name="Hillier L.W."/>
            <person name="Zody M.C."/>
            <person name="Goldstein S."/>
            <person name="She X."/>
            <person name="Bult C.J."/>
            <person name="Agarwala R."/>
            <person name="Cherry J.L."/>
            <person name="DiCuccio M."/>
            <person name="Hlavina W."/>
            <person name="Kapustin Y."/>
            <person name="Meric P."/>
            <person name="Maglott D."/>
            <person name="Birtle Z."/>
            <person name="Marques A.C."/>
            <person name="Graves T."/>
            <person name="Zhou S."/>
            <person name="Teague B."/>
            <person name="Potamousis K."/>
            <person name="Churas C."/>
            <person name="Place M."/>
            <person name="Herschleb J."/>
            <person name="Runnheim R."/>
            <person name="Forrest D."/>
            <person name="Amos-Landgraf J."/>
            <person name="Schwartz D.C."/>
            <person name="Cheng Z."/>
            <person name="Lindblad-Toh K."/>
            <person name="Eichler E.E."/>
            <person name="Ponting C.P."/>
        </authorList>
    </citation>
    <scope>NUCLEOTIDE SEQUENCE [LARGE SCALE GENOMIC DNA]</scope>
    <source>
        <strain>C57BL/6J</strain>
    </source>
</reference>
<reference key="4">
    <citation type="submission" date="2005-07" db="EMBL/GenBank/DDBJ databases">
        <authorList>
            <person name="Mural R.J."/>
            <person name="Adams M.D."/>
            <person name="Myers E.W."/>
            <person name="Smith H.O."/>
            <person name="Venter J.C."/>
        </authorList>
    </citation>
    <scope>NUCLEOTIDE SEQUENCE [LARGE SCALE GENOMIC DNA]</scope>
</reference>
<reference key="5">
    <citation type="journal article" date="2004" name="Genome Res.">
        <title>The status, quality, and expansion of the NIH full-length cDNA project: the Mammalian Gene Collection (MGC).</title>
        <authorList>
            <consortium name="The MGC Project Team"/>
        </authorList>
    </citation>
    <scope>NUCLEOTIDE SEQUENCE [LARGE SCALE MRNA]</scope>
    <source>
        <tissue>Mammary tumor</tissue>
    </source>
</reference>
<reference key="6">
    <citation type="journal article" date="1994" name="EMBO J.">
        <title>Two new proteins preferentially associated with membrane immunoglobulin D.</title>
        <authorList>
            <person name="Kim K.-M."/>
            <person name="Adachi T."/>
            <person name="Nielsen P.J."/>
            <person name="Terashima M."/>
            <person name="Lamers M.C."/>
            <person name="Koehler G."/>
            <person name="Reth M."/>
        </authorList>
    </citation>
    <scope>PROTEIN SEQUENCE OF 150-157; 168-180; 205-213; 214-220; 221-231 AND 232-242</scope>
    <scope>INTERACTION WITH BCAP29 AND IGD</scope>
</reference>
<reference key="7">
    <citation type="journal article" date="1997" name="J. Cell Biol.">
        <title>Export of cellubrevin from the endoplasmic reticulum is controlled by BAP31.</title>
        <authorList>
            <person name="Annaert W.G."/>
            <person name="Becker B."/>
            <person name="Kistner U."/>
            <person name="Reth M."/>
            <person name="Jahn R."/>
        </authorList>
    </citation>
    <scope>FUNCTION</scope>
    <scope>INTERACTION WITH VAMP3</scope>
</reference>
<reference key="8">
    <citation type="journal article" date="2004" name="J. Immunol.">
        <title>Bap29/31 influences the intracellular traffic of MHC class I molecules.</title>
        <authorList>
            <person name="Paquet M.E."/>
            <person name="Cohen-Doyle M."/>
            <person name="Shore G.C."/>
            <person name="Williams D.B."/>
        </authorList>
    </citation>
    <scope>FUNCTION</scope>
</reference>
<reference key="9">
    <citation type="journal article" date="2010" name="Cell">
        <title>A tissue-specific atlas of mouse protein phosphorylation and expression.</title>
        <authorList>
            <person name="Huttlin E.L."/>
            <person name="Jedrychowski M.P."/>
            <person name="Elias J.E."/>
            <person name="Goswami T."/>
            <person name="Rad R."/>
            <person name="Beausoleil S.A."/>
            <person name="Villen J."/>
            <person name="Haas W."/>
            <person name="Sowa M.E."/>
            <person name="Gygi S.P."/>
        </authorList>
    </citation>
    <scope>IDENTIFICATION BY MASS SPECTROMETRY [LARGE SCALE ANALYSIS]</scope>
    <source>
        <tissue>Brain</tissue>
        <tissue>Brown adipose tissue</tissue>
        <tissue>Heart</tissue>
        <tissue>Kidney</tissue>
        <tissue>Liver</tissue>
        <tissue>Lung</tissue>
        <tissue>Pancreas</tissue>
        <tissue>Spleen</tissue>
        <tissue>Testis</tissue>
    </source>
</reference>
<organism>
    <name type="scientific">Mus musculus</name>
    <name type="common">Mouse</name>
    <dbReference type="NCBI Taxonomy" id="10090"/>
    <lineage>
        <taxon>Eukaryota</taxon>
        <taxon>Metazoa</taxon>
        <taxon>Chordata</taxon>
        <taxon>Craniata</taxon>
        <taxon>Vertebrata</taxon>
        <taxon>Euteleostomi</taxon>
        <taxon>Mammalia</taxon>
        <taxon>Eutheria</taxon>
        <taxon>Euarchontoglires</taxon>
        <taxon>Glires</taxon>
        <taxon>Rodentia</taxon>
        <taxon>Myomorpha</taxon>
        <taxon>Muroidea</taxon>
        <taxon>Muridae</taxon>
        <taxon>Murinae</taxon>
        <taxon>Mus</taxon>
        <taxon>Mus</taxon>
    </lineage>
</organism>
<proteinExistence type="evidence at protein level"/>
<feature type="initiator methionine" description="Removed" evidence="2">
    <location>
        <position position="1"/>
    </location>
</feature>
<feature type="chain" id="PRO_0000142892" description="B-cell receptor-associated protein 31">
    <location>
        <begin position="2"/>
        <end position="245"/>
    </location>
</feature>
<feature type="topological domain" description="Lumenal" evidence="3">
    <location>
        <begin position="2"/>
        <end position="6"/>
    </location>
</feature>
<feature type="transmembrane region" description="Helical" evidence="3">
    <location>
        <begin position="7"/>
        <end position="27"/>
    </location>
</feature>
<feature type="topological domain" description="Cytoplasmic" evidence="3">
    <location>
        <begin position="28"/>
        <end position="43"/>
    </location>
</feature>
<feature type="transmembrane region" description="Helical" evidence="3">
    <location>
        <begin position="44"/>
        <end position="64"/>
    </location>
</feature>
<feature type="topological domain" description="Lumenal" evidence="3">
    <location>
        <begin position="65"/>
        <end position="102"/>
    </location>
</feature>
<feature type="transmembrane region" description="Helical" evidence="3">
    <location>
        <begin position="103"/>
        <end position="123"/>
    </location>
</feature>
<feature type="topological domain" description="Cytoplasmic" evidence="3">
    <location>
        <begin position="124"/>
        <end position="245"/>
    </location>
</feature>
<feature type="coiled-coil region" evidence="1">
    <location>
        <begin position="165"/>
        <end position="236"/>
    </location>
</feature>
<feature type="short sequence motif" description="Di-lysine motif">
    <location>
        <begin position="242"/>
        <end position="245"/>
    </location>
</feature>
<feature type="site" description="Cleavage; by caspase-8" evidence="3">
    <location>
        <begin position="164"/>
        <end position="165"/>
    </location>
</feature>
<feature type="sequence conflict" description="In Ref. 2; BAB25427." evidence="7" ref="2">
    <original>S</original>
    <variation>Y</variation>
    <location>
        <position position="28"/>
    </location>
</feature>
<feature type="sequence conflict" description="In Ref. 1; CAA57414." evidence="7" ref="1">
    <original>F</original>
    <variation>L</variation>
    <location>
        <position position="108"/>
    </location>
</feature>
<accession>Q61335</accession>
<accession>A2ALM8</accession>
<accession>Q9D0E9</accession>
<accession>Q9D8G7</accession>
<sequence>MSLQWTTVATFLYAEVFAVLLLCIPFISPKRWQKVFKSRLVELVVTYGNTFFVVLIVILVLLVIDAVREILKYDDVTEKVNLQNNPGAMEHFHMKLFRAQRNLYIAGFSLLLSFLLRRLVTLISQQATLLASNEAFKKQAESASEAAKKYMEENDQLKKGAAEDGDKLDIGNTEMKLEENKSLKNDLRKLKDELASTKKKLEKAENEALAMQKQSEGLTKEYDRLLEEHAKLQASVRGPSVKKEE</sequence>
<comment type="function">
    <text evidence="2 4 6">Functions as a chaperone protein (PubMed:9396746). Is one of the most abundant endoplasmic reticulum (ER) proteins (PubMed:9396746). Plays a role in the export of secreted proteins in the ER, the recognition of abnormally folded protein and their targeting to the ER associated-degradation (ERAD) (PubMed:9396746). Also serves as a cargo receptor for the export of transmembrane proteins (PubMed:15187134). Plays a role in the assembly of the mitochondrial membrane respiratory chain NADH dehydrogenase (Complex I) by stimulating the translocation of NDUFS4 and NDUFB11 from the cytosol to the mitochondria via interaction with TOMM40 (By similarity). In response to ER stress, delocalizes from the ER-mitochondria contact sites and binds BCL2 (By similarity). May be involved in CASP8-mediated apoptosis (By similarity).</text>
</comment>
<comment type="subunit">
    <text evidence="2 5 6">Homodimer and heterodimer with BCAP29 (PubMed:8612576). Binds CASP8 (isoform 9) as a complex containing BCAP31, BCAP29, BCL2 and/or BCL2L1 (By similarity). Forms a complex (via C-terminus) with TOMM40 which mediates the translocation of components of the mitochondrial membrane respiratory chain NADH dehydrogenase (Complex I) from the cytosol to the mitochondria; within the complex BCAP31 interacts directly with unprocessed and processed NDUFS4 and NDUFB11. Interacts with VDAC1 (By similarity). Interacts with VAMP3, VAMP1 and membrane IgD immunoglobulins (PubMed:9396746). Interacts with HACD2 (By similarity). Interacts with DNM1L; may form part of a larger protein complex at the endoplasmic reticulum-mitochondrial interface during mitochondrial fission (By similarity).</text>
</comment>
<comment type="subcellular location">
    <subcellularLocation>
        <location evidence="2">Endoplasmic reticulum membrane</location>
        <topology evidence="3">Multi-pass membrane protein</topology>
    </subcellularLocation>
    <subcellularLocation>
        <location evidence="2">Endoplasmic reticulum-Golgi intermediate compartment membrane</location>
        <topology evidence="3">Multi-pass membrane protein</topology>
    </subcellularLocation>
    <text evidence="2">May shuttle between the ER and the intermediate compartment/cis-Golgi complex. Associates with the mitochondria-associated endoplasmic reticulum membrane via interaction with TOMM40.</text>
</comment>
<comment type="tissue specificity">
    <text evidence="5">Ubiquitous.</text>
</comment>
<comment type="PTM">
    <text evidence="1">Cleaved by CASP8 and other caspases.</text>
</comment>
<comment type="similarity">
    <text evidence="7">Belongs to the BCAP29/BCAP31 family.</text>
</comment>
<dbReference type="EMBL" id="X81816">
    <property type="protein sequence ID" value="CAA57414.1"/>
    <property type="molecule type" value="mRNA"/>
</dbReference>
<dbReference type="EMBL" id="AK008043">
    <property type="protein sequence ID" value="BAB25427.1"/>
    <property type="molecule type" value="mRNA"/>
</dbReference>
<dbReference type="EMBL" id="AK011500">
    <property type="protein sequence ID" value="BAB27660.1"/>
    <property type="molecule type" value="mRNA"/>
</dbReference>
<dbReference type="EMBL" id="AL805924">
    <property type="status" value="NOT_ANNOTATED_CDS"/>
    <property type="molecule type" value="Genomic_DNA"/>
</dbReference>
<dbReference type="EMBL" id="CH466650">
    <property type="protein sequence ID" value="EDL29886.1"/>
    <property type="molecule type" value="Genomic_DNA"/>
</dbReference>
<dbReference type="EMBL" id="BC002106">
    <property type="protein sequence ID" value="AAH02106.1"/>
    <property type="molecule type" value="mRNA"/>
</dbReference>
<dbReference type="CCDS" id="CCDS30209.1"/>
<dbReference type="PIR" id="S71116">
    <property type="entry name" value="S71116"/>
</dbReference>
<dbReference type="RefSeq" id="NP_001300627.1">
    <property type="nucleotide sequence ID" value="NM_001313698.2"/>
</dbReference>
<dbReference type="RefSeq" id="NP_001413068.1">
    <property type="nucleotide sequence ID" value="NM_001426139.1"/>
</dbReference>
<dbReference type="RefSeq" id="NP_036190.2">
    <property type="nucleotide sequence ID" value="NM_012060.5"/>
</dbReference>
<dbReference type="RefSeq" id="XP_006528111.1">
    <property type="nucleotide sequence ID" value="XM_006528048.4"/>
</dbReference>
<dbReference type="RefSeq" id="XP_011245902.1">
    <property type="nucleotide sequence ID" value="XM_011247600.2"/>
</dbReference>
<dbReference type="SMR" id="Q61335"/>
<dbReference type="BioGRID" id="205116">
    <property type="interactions" value="5"/>
</dbReference>
<dbReference type="FunCoup" id="Q61335">
    <property type="interactions" value="2273"/>
</dbReference>
<dbReference type="IntAct" id="Q61335">
    <property type="interactions" value="3"/>
</dbReference>
<dbReference type="MINT" id="Q61335"/>
<dbReference type="STRING" id="10090.ENSMUSP00000002091"/>
<dbReference type="GlyGen" id="Q61335">
    <property type="glycosylation" value="1 site, 1 O-linked glycan (1 site)"/>
</dbReference>
<dbReference type="iPTMnet" id="Q61335"/>
<dbReference type="MetOSite" id="Q61335"/>
<dbReference type="PhosphoSitePlus" id="Q61335"/>
<dbReference type="SwissPalm" id="Q61335"/>
<dbReference type="jPOST" id="Q61335"/>
<dbReference type="PaxDb" id="10090-ENSMUSP00000002091"/>
<dbReference type="ProteomicsDB" id="277111"/>
<dbReference type="Pumba" id="Q61335"/>
<dbReference type="TopDownProteomics" id="Q61335"/>
<dbReference type="Antibodypedia" id="590">
    <property type="antibodies" value="510 antibodies from 44 providers"/>
</dbReference>
<dbReference type="DNASU" id="27061"/>
<dbReference type="Ensembl" id="ENSMUST00000002091.6">
    <property type="protein sequence ID" value="ENSMUSP00000002091.6"/>
    <property type="gene ID" value="ENSMUSG00000002015.6"/>
</dbReference>
<dbReference type="GeneID" id="27061"/>
<dbReference type="KEGG" id="mmu:27061"/>
<dbReference type="UCSC" id="uc009tmj.1">
    <property type="organism name" value="mouse"/>
</dbReference>
<dbReference type="AGR" id="MGI:1350933"/>
<dbReference type="CTD" id="10134"/>
<dbReference type="MGI" id="MGI:1350933">
    <property type="gene designation" value="Bcap31"/>
</dbReference>
<dbReference type="VEuPathDB" id="HostDB:ENSMUSG00000002015"/>
<dbReference type="eggNOG" id="KOG1962">
    <property type="taxonomic scope" value="Eukaryota"/>
</dbReference>
<dbReference type="GeneTree" id="ENSGT00390000011863"/>
<dbReference type="HOGENOM" id="CLU_070975_1_0_1"/>
<dbReference type="InParanoid" id="Q61335"/>
<dbReference type="OMA" id="CEGQKDK"/>
<dbReference type="OrthoDB" id="435607at2759"/>
<dbReference type="PhylomeDB" id="Q61335"/>
<dbReference type="TreeFam" id="TF315310"/>
<dbReference type="Reactome" id="R-MMU-111465">
    <property type="pathway name" value="Apoptotic cleavage of cellular proteins"/>
</dbReference>
<dbReference type="Reactome" id="R-MMU-75153">
    <property type="pathway name" value="Apoptotic execution phase"/>
</dbReference>
<dbReference type="Reactome" id="R-MMU-8980692">
    <property type="pathway name" value="RHOA GTPase cycle"/>
</dbReference>
<dbReference type="Reactome" id="R-MMU-983170">
    <property type="pathway name" value="Antigen Presentation: Folding, assembly and peptide loading of class I MHC"/>
</dbReference>
<dbReference type="BioGRID-ORCS" id="27061">
    <property type="hits" value="7 hits in 80 CRISPR screens"/>
</dbReference>
<dbReference type="ChiTaRS" id="Bcap31">
    <property type="organism name" value="mouse"/>
</dbReference>
<dbReference type="PRO" id="PR:Q61335"/>
<dbReference type="Proteomes" id="UP000000589">
    <property type="component" value="Chromosome X"/>
</dbReference>
<dbReference type="RNAct" id="Q61335">
    <property type="molecule type" value="protein"/>
</dbReference>
<dbReference type="Bgee" id="ENSMUSG00000002015">
    <property type="expression patterns" value="Expressed in paneth cell and 263 other cell types or tissues"/>
</dbReference>
<dbReference type="GO" id="GO:0030136">
    <property type="term" value="C:clathrin-coated vesicle"/>
    <property type="evidence" value="ECO:0007669"/>
    <property type="project" value="Ensembl"/>
</dbReference>
<dbReference type="GO" id="GO:0005789">
    <property type="term" value="C:endoplasmic reticulum membrane"/>
    <property type="evidence" value="ECO:0007669"/>
    <property type="project" value="UniProtKB-SubCell"/>
</dbReference>
<dbReference type="GO" id="GO:0033116">
    <property type="term" value="C:endoplasmic reticulum-Golgi intermediate compartment membrane"/>
    <property type="evidence" value="ECO:0007669"/>
    <property type="project" value="UniProtKB-SubCell"/>
</dbReference>
<dbReference type="GO" id="GO:0032580">
    <property type="term" value="C:Golgi cisterna membrane"/>
    <property type="evidence" value="ECO:0007669"/>
    <property type="project" value="Ensembl"/>
</dbReference>
<dbReference type="GO" id="GO:0000139">
    <property type="term" value="C:Golgi membrane"/>
    <property type="evidence" value="ECO:0000314"/>
    <property type="project" value="MGI"/>
</dbReference>
<dbReference type="GO" id="GO:0005811">
    <property type="term" value="C:lipid droplet"/>
    <property type="evidence" value="ECO:0007669"/>
    <property type="project" value="Ensembl"/>
</dbReference>
<dbReference type="GO" id="GO:0044233">
    <property type="term" value="C:mitochondria-associated endoplasmic reticulum membrane contact site"/>
    <property type="evidence" value="ECO:0007669"/>
    <property type="project" value="Ensembl"/>
</dbReference>
<dbReference type="GO" id="GO:0097038">
    <property type="term" value="C:perinuclear endoplasmic reticulum"/>
    <property type="evidence" value="ECO:0007669"/>
    <property type="project" value="Ensembl"/>
</dbReference>
<dbReference type="GO" id="GO:0005886">
    <property type="term" value="C:plasma membrane"/>
    <property type="evidence" value="ECO:0007669"/>
    <property type="project" value="Ensembl"/>
</dbReference>
<dbReference type="GO" id="GO:0042288">
    <property type="term" value="F:MHC class I protein binding"/>
    <property type="evidence" value="ECO:0000353"/>
    <property type="project" value="MGI"/>
</dbReference>
<dbReference type="GO" id="GO:0044877">
    <property type="term" value="F:protein-containing complex binding"/>
    <property type="evidence" value="ECO:0000314"/>
    <property type="project" value="MGI"/>
</dbReference>
<dbReference type="GO" id="GO:0006915">
    <property type="term" value="P:apoptotic process"/>
    <property type="evidence" value="ECO:0007669"/>
    <property type="project" value="UniProtKB-KW"/>
</dbReference>
<dbReference type="GO" id="GO:0006888">
    <property type="term" value="P:endoplasmic reticulum to Golgi vesicle-mediated transport"/>
    <property type="evidence" value="ECO:0000315"/>
    <property type="project" value="MGI"/>
</dbReference>
<dbReference type="GO" id="GO:0006886">
    <property type="term" value="P:intracellular protein transport"/>
    <property type="evidence" value="ECO:0007669"/>
    <property type="project" value="InterPro"/>
</dbReference>
<dbReference type="GO" id="GO:1904294">
    <property type="term" value="P:positive regulation of ERAD pathway"/>
    <property type="evidence" value="ECO:0007669"/>
    <property type="project" value="Ensembl"/>
</dbReference>
<dbReference type="GO" id="GO:2001244">
    <property type="term" value="P:positive regulation of intrinsic apoptotic signaling pathway"/>
    <property type="evidence" value="ECO:0007669"/>
    <property type="project" value="Ensembl"/>
</dbReference>
<dbReference type="GO" id="GO:1904154">
    <property type="term" value="P:positive regulation of retrograde protein transport, ER to cytosol"/>
    <property type="evidence" value="ECO:0007669"/>
    <property type="project" value="Ensembl"/>
</dbReference>
<dbReference type="GO" id="GO:2000060">
    <property type="term" value="P:positive regulation of ubiquitin-dependent protein catabolic process"/>
    <property type="evidence" value="ECO:0007669"/>
    <property type="project" value="Ensembl"/>
</dbReference>
<dbReference type="GO" id="GO:0070973">
    <property type="term" value="P:protein localization to endoplasmic reticulum exit site"/>
    <property type="evidence" value="ECO:0000316"/>
    <property type="project" value="MGI"/>
</dbReference>
<dbReference type="GO" id="GO:0006626">
    <property type="term" value="P:protein targeting to mitochondrion"/>
    <property type="evidence" value="ECO:0007669"/>
    <property type="project" value="Ensembl"/>
</dbReference>
<dbReference type="GO" id="GO:0034976">
    <property type="term" value="P:response to endoplasmic reticulum stress"/>
    <property type="evidence" value="ECO:0007669"/>
    <property type="project" value="Ensembl"/>
</dbReference>
<dbReference type="GO" id="GO:0007283">
    <property type="term" value="P:spermatogenesis"/>
    <property type="evidence" value="ECO:0000270"/>
    <property type="project" value="BHF-UCL"/>
</dbReference>
<dbReference type="FunFam" id="1.20.5.110:FF:000011">
    <property type="entry name" value="B-cell receptor-associated protein 29"/>
    <property type="match status" value="1"/>
</dbReference>
<dbReference type="Gene3D" id="1.20.5.110">
    <property type="match status" value="1"/>
</dbReference>
<dbReference type="InterPro" id="IPR008417">
    <property type="entry name" value="BAP29/BAP31"/>
</dbReference>
<dbReference type="InterPro" id="IPR040463">
    <property type="entry name" value="BAP29/BAP31_N"/>
</dbReference>
<dbReference type="InterPro" id="IPR041672">
    <property type="entry name" value="Bap31/Bap29_C"/>
</dbReference>
<dbReference type="PANTHER" id="PTHR12701:SF15">
    <property type="entry name" value="B-CELL RECEPTOR-ASSOCIATED PROTEIN 31"/>
    <property type="match status" value="1"/>
</dbReference>
<dbReference type="PANTHER" id="PTHR12701">
    <property type="entry name" value="BCR-ASSOCIATED PROTEIN, BAP"/>
    <property type="match status" value="1"/>
</dbReference>
<dbReference type="Pfam" id="PF05529">
    <property type="entry name" value="Bap31"/>
    <property type="match status" value="1"/>
</dbReference>
<dbReference type="Pfam" id="PF18035">
    <property type="entry name" value="Bap31_Bap29_C"/>
    <property type="match status" value="1"/>
</dbReference>
<name>BAP31_MOUSE</name>